<feature type="signal peptide" evidence="2">
    <location>
        <begin position="1"/>
        <end position="19"/>
    </location>
</feature>
<feature type="propeptide" id="PRO_0000425483" evidence="1">
    <location>
        <begin position="20"/>
        <end position="41"/>
    </location>
</feature>
<feature type="chain" id="PRO_0000425484" description="Kappa-scoloptoxin(07)-Ssm2f" evidence="1">
    <location>
        <begin position="44"/>
        <end position="74"/>
    </location>
</feature>
<comment type="function">
    <text evidence="1">Inhibits voltage-gated potassium channels.</text>
</comment>
<comment type="subcellular location">
    <subcellularLocation>
        <location evidence="5">Secreted</location>
    </subcellularLocation>
</comment>
<comment type="tissue specificity">
    <text evidence="5">Expressed by the venom gland.</text>
</comment>
<comment type="PTM">
    <text evidence="4">Contains 3 disulfide bonds.</text>
</comment>
<comment type="similarity">
    <text evidence="4">Belongs to the scoloptoxin-07 family.</text>
</comment>
<comment type="sequence caution" evidence="4">
    <conflict type="erroneous initiation">
        <sequence resource="EMBL-CDS" id="AFM55015"/>
    </conflict>
    <text>Extended N-terminus.</text>
</comment>
<accession>I6S7H3</accession>
<name>TX72F_SCOMU</name>
<protein>
    <recommendedName>
        <fullName evidence="1">Kappa-scoloptoxin(07)-Ssm2f</fullName>
        <shortName evidence="1">Kappa-SLPTX(07)-Ssm2f</shortName>
    </recommendedName>
    <alternativeName>
        <fullName evidence="3">Kappa-scoloptoxin-Ssm2f</fullName>
        <shortName evidence="3">Kappa-SLPTX-Ssm2f</shortName>
    </alternativeName>
</protein>
<reference key="1">
    <citation type="journal article" date="2012" name="Mol. Cell. Proteomics">
        <title>Chemical punch packed in venoms makes centipedes excellent predators.</title>
        <authorList>
            <person name="Yang S."/>
            <person name="Liu Z."/>
            <person name="Xiao Y."/>
            <person name="Li Y."/>
            <person name="Rong M."/>
            <person name="Liang S."/>
            <person name="Zhang Z."/>
            <person name="Yu H."/>
            <person name="King G.F."/>
            <person name="Lai R."/>
        </authorList>
    </citation>
    <scope>NUCLEOTIDE SEQUENCE [MRNA]</scope>
    <source>
        <tissue>Venom gland</tissue>
    </source>
</reference>
<dbReference type="EMBL" id="JQ757068">
    <property type="protein sequence ID" value="AFM55015.1"/>
    <property type="status" value="ALT_INIT"/>
    <property type="molecule type" value="mRNA"/>
</dbReference>
<dbReference type="SMR" id="I6S7H3"/>
<dbReference type="GO" id="GO:0005576">
    <property type="term" value="C:extracellular region"/>
    <property type="evidence" value="ECO:0007669"/>
    <property type="project" value="UniProtKB-SubCell"/>
</dbReference>
<dbReference type="GO" id="GO:0015459">
    <property type="term" value="F:potassium channel regulator activity"/>
    <property type="evidence" value="ECO:0007669"/>
    <property type="project" value="UniProtKB-KW"/>
</dbReference>
<dbReference type="GO" id="GO:0090729">
    <property type="term" value="F:toxin activity"/>
    <property type="evidence" value="ECO:0007669"/>
    <property type="project" value="UniProtKB-KW"/>
</dbReference>
<evidence type="ECO:0000250" key="1">
    <source>
        <dbReference type="UniProtKB" id="I6RA66"/>
    </source>
</evidence>
<evidence type="ECO:0000255" key="2"/>
<evidence type="ECO:0000303" key="3">
    <source>
    </source>
</evidence>
<evidence type="ECO:0000305" key="4"/>
<evidence type="ECO:0000305" key="5">
    <source>
    </source>
</evidence>
<organism>
    <name type="scientific">Scolopendra mutilans</name>
    <name type="common">Chinese red-headed centipede</name>
    <name type="synonym">Scolopendra subspinipes mutilans</name>
    <dbReference type="NCBI Taxonomy" id="2836329"/>
    <lineage>
        <taxon>Eukaryota</taxon>
        <taxon>Metazoa</taxon>
        <taxon>Ecdysozoa</taxon>
        <taxon>Arthropoda</taxon>
        <taxon>Myriapoda</taxon>
        <taxon>Chilopoda</taxon>
        <taxon>Pleurostigmophora</taxon>
        <taxon>Scolopendromorpha</taxon>
        <taxon>Scolopendridae</taxon>
        <taxon>Scolopendra</taxon>
    </lineage>
</organism>
<sequence>MLVFYAILFVTVFSNTVMGATIDKPIPKPIFREAIEEMEVNKRAKNPYCKEEKCPVGKHCPKKPIVCRIGPCCV</sequence>
<keyword id="KW-0165">Cleavage on pair of basic residues</keyword>
<keyword id="KW-1015">Disulfide bond</keyword>
<keyword id="KW-0872">Ion channel impairing toxin</keyword>
<keyword id="KW-0528">Neurotoxin</keyword>
<keyword id="KW-0632">Potassium channel impairing toxin</keyword>
<keyword id="KW-0964">Secreted</keyword>
<keyword id="KW-0732">Signal</keyword>
<keyword id="KW-0800">Toxin</keyword>
<keyword id="KW-1220">Voltage-gated potassium channel impairing toxin</keyword>
<proteinExistence type="inferred from homology"/>